<keyword id="KW-0903">Direct protein sequencing</keyword>
<keyword id="KW-1015">Disulfide bond</keyword>
<keyword id="KW-1199">Hemostasis impairing toxin</keyword>
<keyword id="KW-1202">Platelet aggregation activating toxin</keyword>
<keyword id="KW-0964">Secreted</keyword>
<keyword id="KW-0732">Signal</keyword>
<keyword id="KW-0800">Toxin</keyword>
<name>SLB_GLOBL</name>
<evidence type="ECO:0000255" key="1">
    <source>
        <dbReference type="PROSITE-ProRule" id="PRU00040"/>
    </source>
</evidence>
<evidence type="ECO:0000269" key="2">
    <source>
    </source>
</evidence>
<evidence type="ECO:0000305" key="3"/>
<reference evidence="3" key="1">
    <citation type="journal article" date="1998" name="Thromb. Haemost.">
        <title>The cDNA cloning and molecular characterization of a snake venom platelet glycoprotein Ib-binding protein, mamushigin, from Agkistrodon halys blomhoffii venom.</title>
        <authorList>
            <person name="Sakurai Y."/>
            <person name="Fujimura Y."/>
            <person name="Kokubo T."/>
            <person name="Imamura K."/>
            <person name="Kawasaki T."/>
            <person name="Handa M."/>
            <person name="Suzuki M."/>
            <person name="Matsui T."/>
            <person name="Titani K."/>
            <person name="Yoshioka A."/>
        </authorList>
    </citation>
    <scope>NUCLEOTIDE SEQUENCE [MRNA]</scope>
    <scope>PROTEIN SEQUENCE OF 24-56</scope>
    <scope>SUBUNIT</scope>
    <scope>MASS SPECTROMETRY</scope>
    <source>
        <tissue evidence="2">Venom</tissue>
        <tissue>Venom gland</tissue>
    </source>
</reference>
<protein>
    <recommendedName>
        <fullName>Snaclec mamushigin subunit beta</fullName>
    </recommendedName>
</protein>
<comment type="function">
    <text>Binds to platelet GPIbalpha (GP1BA) and enhances platelet aggregation at low-shear stress. At high-shear stress, blocks platelet aggregation in a dose-dependent manner.</text>
</comment>
<comment type="subunit">
    <text evidence="2">Heterodimer of subunits alpha and beta; disulfide-linked.</text>
</comment>
<comment type="subcellular location">
    <subcellularLocation>
        <location evidence="3">Secreted</location>
    </subcellularLocation>
</comment>
<comment type="tissue specificity">
    <text>Expressed by the venom gland.</text>
</comment>
<comment type="mass spectrometry"/>
<comment type="similarity">
    <text evidence="3">Belongs to the snaclec family.</text>
</comment>
<dbReference type="EMBL" id="AB019616">
    <property type="protein sequence ID" value="BAA34425.1"/>
    <property type="molecule type" value="mRNA"/>
</dbReference>
<dbReference type="SMR" id="Q9YI92"/>
<dbReference type="GO" id="GO:0005576">
    <property type="term" value="C:extracellular region"/>
    <property type="evidence" value="ECO:0007669"/>
    <property type="project" value="UniProtKB-SubCell"/>
</dbReference>
<dbReference type="GO" id="GO:0090729">
    <property type="term" value="F:toxin activity"/>
    <property type="evidence" value="ECO:0007669"/>
    <property type="project" value="UniProtKB-KW"/>
</dbReference>
<dbReference type="GO" id="GO:0007596">
    <property type="term" value="P:blood coagulation"/>
    <property type="evidence" value="ECO:0000314"/>
    <property type="project" value="UniProtKB"/>
</dbReference>
<dbReference type="FunFam" id="3.10.100.10:FF:000087">
    <property type="entry name" value="Snaclec rhodocetin subunit delta"/>
    <property type="match status" value="1"/>
</dbReference>
<dbReference type="Gene3D" id="3.10.100.10">
    <property type="entry name" value="Mannose-Binding Protein A, subunit A"/>
    <property type="match status" value="1"/>
</dbReference>
<dbReference type="InterPro" id="IPR001304">
    <property type="entry name" value="C-type_lectin-like"/>
</dbReference>
<dbReference type="InterPro" id="IPR016186">
    <property type="entry name" value="C-type_lectin-like/link_sf"/>
</dbReference>
<dbReference type="InterPro" id="IPR050111">
    <property type="entry name" value="C-type_lectin/snaclec_domain"/>
</dbReference>
<dbReference type="InterPro" id="IPR018378">
    <property type="entry name" value="C-type_lectin_CS"/>
</dbReference>
<dbReference type="InterPro" id="IPR016187">
    <property type="entry name" value="CTDL_fold"/>
</dbReference>
<dbReference type="PANTHER" id="PTHR22803">
    <property type="entry name" value="MANNOSE, PHOSPHOLIPASE, LECTIN RECEPTOR RELATED"/>
    <property type="match status" value="1"/>
</dbReference>
<dbReference type="Pfam" id="PF00059">
    <property type="entry name" value="Lectin_C"/>
    <property type="match status" value="1"/>
</dbReference>
<dbReference type="SMART" id="SM00034">
    <property type="entry name" value="CLECT"/>
    <property type="match status" value="1"/>
</dbReference>
<dbReference type="SUPFAM" id="SSF56436">
    <property type="entry name" value="C-type lectin-like"/>
    <property type="match status" value="1"/>
</dbReference>
<dbReference type="PROSITE" id="PS00615">
    <property type="entry name" value="C_TYPE_LECTIN_1"/>
    <property type="match status" value="1"/>
</dbReference>
<dbReference type="PROSITE" id="PS50041">
    <property type="entry name" value="C_TYPE_LECTIN_2"/>
    <property type="match status" value="1"/>
</dbReference>
<feature type="signal peptide" evidence="2">
    <location>
        <begin position="1"/>
        <end position="23"/>
    </location>
</feature>
<feature type="chain" id="PRO_0000017527" description="Snaclec mamushigin subunit beta">
    <location>
        <begin position="24"/>
        <end position="146"/>
    </location>
</feature>
<feature type="domain" description="C-type lectin" evidence="1">
    <location>
        <begin position="32"/>
        <end position="143"/>
    </location>
</feature>
<feature type="disulfide bond" evidence="1">
    <location>
        <begin position="25"/>
        <end position="36"/>
    </location>
</feature>
<feature type="disulfide bond" evidence="1">
    <location>
        <begin position="53"/>
        <end position="142"/>
    </location>
</feature>
<feature type="disulfide bond" description="Interchain (with C-103 in subunit alpha)" evidence="1">
    <location>
        <position position="98"/>
    </location>
</feature>
<feature type="disulfide bond" evidence="1">
    <location>
        <begin position="119"/>
        <end position="134"/>
    </location>
</feature>
<proteinExistence type="evidence at protein level"/>
<organism>
    <name type="scientific">Gloydius blomhoffii</name>
    <name type="common">Mamushi</name>
    <name type="synonym">Agkistrodon halys blomhoffi</name>
    <dbReference type="NCBI Taxonomy" id="242054"/>
    <lineage>
        <taxon>Eukaryota</taxon>
        <taxon>Metazoa</taxon>
        <taxon>Chordata</taxon>
        <taxon>Craniata</taxon>
        <taxon>Vertebrata</taxon>
        <taxon>Euteleostomi</taxon>
        <taxon>Lepidosauria</taxon>
        <taxon>Squamata</taxon>
        <taxon>Bifurcata</taxon>
        <taxon>Unidentata</taxon>
        <taxon>Episquamata</taxon>
        <taxon>Toxicofera</taxon>
        <taxon>Serpentes</taxon>
        <taxon>Colubroidea</taxon>
        <taxon>Viperidae</taxon>
        <taxon>Crotalinae</taxon>
        <taxon>Gloydius</taxon>
    </lineage>
</organism>
<sequence>MGRFIFLSFGLLVVFVSLSGTGADCPSDWSSYEGHCYRVFQKEMTWEDAEKFCTQQRKESHLVSFHSSEEVDFVVSMTWPILKYDFVWIGLNNIWNECMVEWTDGTRLSHNAWITESECIAAKTTDNQWLSRPCSRTYNVVCKFQE</sequence>
<accession>Q9YI92</accession>